<gene>
    <name evidence="1" type="primary">ribL</name>
    <name type="ordered locus">MM_0242</name>
</gene>
<evidence type="ECO:0000255" key="1">
    <source>
        <dbReference type="HAMAP-Rule" id="MF_02115"/>
    </source>
</evidence>
<organism>
    <name type="scientific">Methanosarcina mazei (strain ATCC BAA-159 / DSM 3647 / Goe1 / Go1 / JCM 11833 / OCM 88)</name>
    <name type="common">Methanosarcina frisia</name>
    <dbReference type="NCBI Taxonomy" id="192952"/>
    <lineage>
        <taxon>Archaea</taxon>
        <taxon>Methanobacteriati</taxon>
        <taxon>Methanobacteriota</taxon>
        <taxon>Stenosarchaea group</taxon>
        <taxon>Methanomicrobia</taxon>
        <taxon>Methanosarcinales</taxon>
        <taxon>Methanosarcinaceae</taxon>
        <taxon>Methanosarcina</taxon>
    </lineage>
</organism>
<reference key="1">
    <citation type="journal article" date="2002" name="J. Mol. Microbiol. Biotechnol.">
        <title>The genome of Methanosarcina mazei: evidence for lateral gene transfer between Bacteria and Archaea.</title>
        <authorList>
            <person name="Deppenmeier U."/>
            <person name="Johann A."/>
            <person name="Hartsch T."/>
            <person name="Merkl R."/>
            <person name="Schmitz R.A."/>
            <person name="Martinez-Arias R."/>
            <person name="Henne A."/>
            <person name="Wiezer A."/>
            <person name="Baeumer S."/>
            <person name="Jacobi C."/>
            <person name="Brueggemann H."/>
            <person name="Lienard T."/>
            <person name="Christmann A."/>
            <person name="Boemecke M."/>
            <person name="Steckel S."/>
            <person name="Bhattacharyya A."/>
            <person name="Lykidis A."/>
            <person name="Overbeek R."/>
            <person name="Klenk H.-P."/>
            <person name="Gunsalus R.P."/>
            <person name="Fritz H.-J."/>
            <person name="Gottschalk G."/>
        </authorList>
    </citation>
    <scope>NUCLEOTIDE SEQUENCE [LARGE SCALE GENOMIC DNA]</scope>
    <source>
        <strain>ATCC BAA-159 / DSM 3647 / Goe1 / Go1 / JCM 11833 / OCM 88</strain>
    </source>
</reference>
<proteinExistence type="inferred from homology"/>
<accession>Q8Q095</accession>
<dbReference type="EC" id="2.7.7.2" evidence="1"/>
<dbReference type="EMBL" id="AE008384">
    <property type="protein sequence ID" value="AAM29938.1"/>
    <property type="molecule type" value="Genomic_DNA"/>
</dbReference>
<dbReference type="RefSeq" id="WP_011032196.1">
    <property type="nucleotide sequence ID" value="NC_003901.1"/>
</dbReference>
<dbReference type="SMR" id="Q8Q095"/>
<dbReference type="KEGG" id="mma:MM_0242"/>
<dbReference type="PATRIC" id="fig|192952.21.peg.294"/>
<dbReference type="eggNOG" id="arCOG01222">
    <property type="taxonomic scope" value="Archaea"/>
</dbReference>
<dbReference type="HOGENOM" id="CLU_034585_2_1_2"/>
<dbReference type="UniPathway" id="UPA00277">
    <property type="reaction ID" value="UER00407"/>
</dbReference>
<dbReference type="Proteomes" id="UP000000595">
    <property type="component" value="Chromosome"/>
</dbReference>
<dbReference type="GO" id="GO:0005524">
    <property type="term" value="F:ATP binding"/>
    <property type="evidence" value="ECO:0007669"/>
    <property type="project" value="UniProtKB-UniRule"/>
</dbReference>
<dbReference type="GO" id="GO:0003919">
    <property type="term" value="F:FMN adenylyltransferase activity"/>
    <property type="evidence" value="ECO:0007669"/>
    <property type="project" value="UniProtKB-UniRule"/>
</dbReference>
<dbReference type="GO" id="GO:0006747">
    <property type="term" value="P:FAD biosynthetic process"/>
    <property type="evidence" value="ECO:0007669"/>
    <property type="project" value="UniProtKB-UniRule"/>
</dbReference>
<dbReference type="GO" id="GO:0046444">
    <property type="term" value="P:FMN metabolic process"/>
    <property type="evidence" value="ECO:0007669"/>
    <property type="project" value="UniProtKB-UniRule"/>
</dbReference>
<dbReference type="CDD" id="cd02170">
    <property type="entry name" value="cytidylyltransferase"/>
    <property type="match status" value="1"/>
</dbReference>
<dbReference type="Gene3D" id="3.40.50.620">
    <property type="entry name" value="HUPs"/>
    <property type="match status" value="1"/>
</dbReference>
<dbReference type="HAMAP" id="MF_02115">
    <property type="entry name" value="FAD_synth_arch"/>
    <property type="match status" value="1"/>
</dbReference>
<dbReference type="InterPro" id="IPR050385">
    <property type="entry name" value="Archaeal_FAD_synthase"/>
</dbReference>
<dbReference type="InterPro" id="IPR004821">
    <property type="entry name" value="Cyt_trans-like"/>
</dbReference>
<dbReference type="InterPro" id="IPR024902">
    <property type="entry name" value="FAD_synth_RibL"/>
</dbReference>
<dbReference type="InterPro" id="IPR014729">
    <property type="entry name" value="Rossmann-like_a/b/a_fold"/>
</dbReference>
<dbReference type="NCBIfam" id="TIGR00125">
    <property type="entry name" value="cyt_tran_rel"/>
    <property type="match status" value="1"/>
</dbReference>
<dbReference type="PANTHER" id="PTHR43793">
    <property type="entry name" value="FAD SYNTHASE"/>
    <property type="match status" value="1"/>
</dbReference>
<dbReference type="PANTHER" id="PTHR43793:SF1">
    <property type="entry name" value="FAD SYNTHASE"/>
    <property type="match status" value="1"/>
</dbReference>
<dbReference type="Pfam" id="PF01467">
    <property type="entry name" value="CTP_transf_like"/>
    <property type="match status" value="1"/>
</dbReference>
<dbReference type="SUPFAM" id="SSF52374">
    <property type="entry name" value="Nucleotidylyl transferase"/>
    <property type="match status" value="1"/>
</dbReference>
<sequence>MLAGYYPSPGDLLTRVLATGTFDILHPGHVYFLAQAKALGDELFVIIARDSNVTHKPKPVIPEEQRLEMVDALKAVNKAILGSEKDMFEPLREIKPDIIALGYDQRFDTEILEKELTKRGLPAKVVRIPLSKECPLCSTGTIIKEVLKRYG</sequence>
<keyword id="KW-0067">ATP-binding</keyword>
<keyword id="KW-0274">FAD</keyword>
<keyword id="KW-0285">Flavoprotein</keyword>
<keyword id="KW-0288">FMN</keyword>
<keyword id="KW-0547">Nucleotide-binding</keyword>
<keyword id="KW-0548">Nucleotidyltransferase</keyword>
<keyword id="KW-0808">Transferase</keyword>
<feature type="chain" id="PRO_0000406270" description="FAD synthase">
    <location>
        <begin position="1"/>
        <end position="151"/>
    </location>
</feature>
<feature type="binding site" evidence="1">
    <location>
        <begin position="21"/>
        <end position="22"/>
    </location>
    <ligand>
        <name>ATP</name>
        <dbReference type="ChEBI" id="CHEBI:30616"/>
    </ligand>
</feature>
<feature type="binding site" evidence="1">
    <location>
        <begin position="26"/>
        <end position="29"/>
    </location>
    <ligand>
        <name>ATP</name>
        <dbReference type="ChEBI" id="CHEBI:30616"/>
    </ligand>
</feature>
<feature type="binding site" evidence="1">
    <location>
        <position position="104"/>
    </location>
    <ligand>
        <name>ATP</name>
        <dbReference type="ChEBI" id="CHEBI:30616"/>
    </ligand>
</feature>
<protein>
    <recommendedName>
        <fullName evidence="1">FAD synthase</fullName>
        <ecNumber evidence="1">2.7.7.2</ecNumber>
    </recommendedName>
    <alternativeName>
        <fullName evidence="1">FMN adenylyltransferase</fullName>
    </alternativeName>
    <alternativeName>
        <fullName evidence="1">Flavin adenine dinucleotide synthase</fullName>
    </alternativeName>
</protein>
<name>RIBL_METMA</name>
<comment type="function">
    <text evidence="1">Catalyzes the transfer of the AMP portion of ATP to flavin mononucleotide (FMN) to produce flavin adenine dinucleotide (FAD) coenzyme.</text>
</comment>
<comment type="catalytic activity">
    <reaction evidence="1">
        <text>FMN + ATP + H(+) = FAD + diphosphate</text>
        <dbReference type="Rhea" id="RHEA:17237"/>
        <dbReference type="ChEBI" id="CHEBI:15378"/>
        <dbReference type="ChEBI" id="CHEBI:30616"/>
        <dbReference type="ChEBI" id="CHEBI:33019"/>
        <dbReference type="ChEBI" id="CHEBI:57692"/>
        <dbReference type="ChEBI" id="CHEBI:58210"/>
        <dbReference type="EC" id="2.7.7.2"/>
    </reaction>
</comment>
<comment type="cofactor">
    <cofactor evidence="1">
        <name>a divalent metal cation</name>
        <dbReference type="ChEBI" id="CHEBI:60240"/>
    </cofactor>
</comment>
<comment type="pathway">
    <text evidence="1">Cofactor biosynthesis; FAD biosynthesis; FAD from FMN: step 1/1.</text>
</comment>
<comment type="subunit">
    <text evidence="1">Homodimer.</text>
</comment>
<comment type="similarity">
    <text evidence="1">Belongs to the archaeal FAD synthase family.</text>
</comment>